<reference key="1">
    <citation type="journal article" date="2008" name="Nature">
        <title>The genome of the choanoflagellate Monosiga brevicollis and the origin of metazoans.</title>
        <authorList>
            <consortium name="JGI Sequencing"/>
            <person name="King N."/>
            <person name="Westbrook M.J."/>
            <person name="Young S.L."/>
            <person name="Kuo A."/>
            <person name="Abedin M."/>
            <person name="Chapman J."/>
            <person name="Fairclough S."/>
            <person name="Hellsten U."/>
            <person name="Isogai Y."/>
            <person name="Letunic I."/>
            <person name="Marr M."/>
            <person name="Pincus D."/>
            <person name="Putnam N."/>
            <person name="Rokas A."/>
            <person name="Wright K.J."/>
            <person name="Zuzow R."/>
            <person name="Dirks W."/>
            <person name="Good M."/>
            <person name="Goodstein D."/>
            <person name="Lemons D."/>
            <person name="Li W."/>
            <person name="Lyons J.B."/>
            <person name="Morris A."/>
            <person name="Nichols S."/>
            <person name="Richter D.J."/>
            <person name="Salamov A."/>
            <person name="Bork P."/>
            <person name="Lim W.A."/>
            <person name="Manning G."/>
            <person name="Miller W.T."/>
            <person name="McGinnis W."/>
            <person name="Shapiro H."/>
            <person name="Tjian R."/>
            <person name="Grigoriev I.V."/>
            <person name="Rokhsar D."/>
        </authorList>
    </citation>
    <scope>NUCLEOTIDE SEQUENCE [LARGE SCALE GENOMIC DNA]</scope>
    <source>
        <strain>MX1 / ATCC 50154</strain>
    </source>
</reference>
<gene>
    <name type="ORF">30792</name>
</gene>
<evidence type="ECO:0000255" key="1">
    <source>
        <dbReference type="HAMAP-Rule" id="MF_03015"/>
    </source>
</evidence>
<evidence type="ECO:0000256" key="2">
    <source>
        <dbReference type="SAM" id="MobiDB-lite"/>
    </source>
</evidence>
<evidence type="ECO:0000305" key="3"/>
<sequence length="278" mass="30405">MSEGFDILKPTEADIQKLLMAKVHLGASNCTTAMSKYVYKRRSDGVNVIDLNKTYEKIVLAARIIAAVDSPANVCAISGRNFGQRAILKFCNHIGGAFPIAGRFTPGAFTNQIQKAFQEPRLLVLTDPLVDHQAVREASYVNIPIISLCDVDAPLRYVDVVIPCNNKSPHAIGIVWWMLAREVLRLRGTLPRDAEWDVMPDLYFFRDPEEIKKEEEAAAAAKEAEDDTGYTTQWDDAALDADWSATGTGNFAAAPADGNWGATTGGDWAAAGGEEWTN</sequence>
<organism>
    <name type="scientific">Monosiga brevicollis</name>
    <name type="common">Choanoflagellate</name>
    <dbReference type="NCBI Taxonomy" id="81824"/>
    <lineage>
        <taxon>Eukaryota</taxon>
        <taxon>Choanoflagellata</taxon>
        <taxon>Craspedida</taxon>
        <taxon>Salpingoecidae</taxon>
        <taxon>Monosiga</taxon>
    </lineage>
</organism>
<protein>
    <recommendedName>
        <fullName evidence="1">Small ribosomal subunit protein uS2</fullName>
    </recommendedName>
    <alternativeName>
        <fullName evidence="3">40S ribosomal protein SA</fullName>
    </alternativeName>
</protein>
<proteinExistence type="inferred from homology"/>
<accession>A9UPA2</accession>
<feature type="chain" id="PRO_0000371656" description="Small ribosomal subunit protein uS2">
    <location>
        <begin position="1"/>
        <end position="278"/>
    </location>
</feature>
<feature type="region of interest" description="Disordered" evidence="2">
    <location>
        <begin position="216"/>
        <end position="235"/>
    </location>
</feature>
<feature type="region of interest" description="Disordered" evidence="2">
    <location>
        <begin position="250"/>
        <end position="278"/>
    </location>
</feature>
<feature type="compositionally biased region" description="Low complexity" evidence="2">
    <location>
        <begin position="256"/>
        <end position="278"/>
    </location>
</feature>
<comment type="function">
    <text evidence="1">Required for the assembly and/or stability of the 40S ribosomal subunit. Required for the processing of the 20S rRNA-precursor to mature 18S rRNA in a late step of the maturation of 40S ribosomal subunits.</text>
</comment>
<comment type="subunit">
    <text evidence="1">Component of the small ribosomal subunit. Mature ribosomes consist of a small (40S) and a large (60S) subunit. The 40S subunit contains about 33 different proteins and 1 molecule of RNA (18S). The 60S subunit contains about 49 different proteins and 3 molecules of RNA (25S, 5.8S and 5S). Interacts with ribosomal protein S21.</text>
</comment>
<comment type="subcellular location">
    <subcellularLocation>
        <location evidence="1">Cytoplasm</location>
    </subcellularLocation>
</comment>
<comment type="similarity">
    <text evidence="1">Belongs to the universal ribosomal protein uS2 family.</text>
</comment>
<keyword id="KW-0963">Cytoplasm</keyword>
<keyword id="KW-1185">Reference proteome</keyword>
<keyword id="KW-0687">Ribonucleoprotein</keyword>
<keyword id="KW-0689">Ribosomal protein</keyword>
<name>RSSA_MONBE</name>
<dbReference type="EMBL" id="CH991543">
    <property type="protein sequence ID" value="EDQ92383.1"/>
    <property type="molecule type" value="Genomic_DNA"/>
</dbReference>
<dbReference type="RefSeq" id="XP_001742145.1">
    <property type="nucleotide sequence ID" value="XM_001742093.1"/>
</dbReference>
<dbReference type="SMR" id="A9UPA2"/>
<dbReference type="FunCoup" id="A9UPA2">
    <property type="interactions" value="1267"/>
</dbReference>
<dbReference type="STRING" id="81824.A9UPA2"/>
<dbReference type="EnsemblProtists" id="EDQ92383">
    <property type="protein sequence ID" value="EDQ92383"/>
    <property type="gene ID" value="MONBRDRAFT_30792"/>
</dbReference>
<dbReference type="KEGG" id="mbr:MONBRDRAFT_30792"/>
<dbReference type="eggNOG" id="KOG0830">
    <property type="taxonomic scope" value="Eukaryota"/>
</dbReference>
<dbReference type="InParanoid" id="A9UPA2"/>
<dbReference type="OMA" id="VKNFFEP"/>
<dbReference type="Proteomes" id="UP000001357">
    <property type="component" value="Unassembled WGS sequence"/>
</dbReference>
<dbReference type="GO" id="GO:0022627">
    <property type="term" value="C:cytosolic small ribosomal subunit"/>
    <property type="evidence" value="ECO:0000318"/>
    <property type="project" value="GO_Central"/>
</dbReference>
<dbReference type="GO" id="GO:0003735">
    <property type="term" value="F:structural constituent of ribosome"/>
    <property type="evidence" value="ECO:0000318"/>
    <property type="project" value="GO_Central"/>
</dbReference>
<dbReference type="GO" id="GO:0002181">
    <property type="term" value="P:cytoplasmic translation"/>
    <property type="evidence" value="ECO:0000318"/>
    <property type="project" value="GO_Central"/>
</dbReference>
<dbReference type="GO" id="GO:0000028">
    <property type="term" value="P:ribosomal small subunit assembly"/>
    <property type="evidence" value="ECO:0000318"/>
    <property type="project" value="GO_Central"/>
</dbReference>
<dbReference type="CDD" id="cd01425">
    <property type="entry name" value="RPS2"/>
    <property type="match status" value="1"/>
</dbReference>
<dbReference type="FunFam" id="3.40.50.10490:FF:000012">
    <property type="entry name" value="40S ribosomal protein SA"/>
    <property type="match status" value="1"/>
</dbReference>
<dbReference type="Gene3D" id="3.40.50.10490">
    <property type="entry name" value="Glucose-6-phosphate isomerase like protein, domain 1"/>
    <property type="match status" value="1"/>
</dbReference>
<dbReference type="HAMAP" id="MF_03015">
    <property type="entry name" value="Ribosomal_S2_euk"/>
    <property type="match status" value="1"/>
</dbReference>
<dbReference type="InterPro" id="IPR001865">
    <property type="entry name" value="Ribosomal_uS2"/>
</dbReference>
<dbReference type="InterPro" id="IPR032281">
    <property type="entry name" value="Ribosomal_uS2_C"/>
</dbReference>
<dbReference type="InterPro" id="IPR018130">
    <property type="entry name" value="Ribosomal_uS2_CS"/>
</dbReference>
<dbReference type="InterPro" id="IPR027498">
    <property type="entry name" value="Ribosomal_uS2_euk"/>
</dbReference>
<dbReference type="InterPro" id="IPR005707">
    <property type="entry name" value="Ribosomal_uS2_euk/arc"/>
</dbReference>
<dbReference type="InterPro" id="IPR023591">
    <property type="entry name" value="Ribosomal_uS2_flav_dom_sf"/>
</dbReference>
<dbReference type="NCBIfam" id="TIGR01012">
    <property type="entry name" value="uS2_euk_arch"/>
    <property type="match status" value="1"/>
</dbReference>
<dbReference type="PANTHER" id="PTHR11489">
    <property type="entry name" value="40S RIBOSOMAL PROTEIN SA"/>
    <property type="match status" value="1"/>
</dbReference>
<dbReference type="Pfam" id="PF16122">
    <property type="entry name" value="40S_SA_C"/>
    <property type="match status" value="1"/>
</dbReference>
<dbReference type="Pfam" id="PF00318">
    <property type="entry name" value="Ribosomal_S2"/>
    <property type="match status" value="1"/>
</dbReference>
<dbReference type="PRINTS" id="PR00395">
    <property type="entry name" value="RIBOSOMALS2"/>
</dbReference>
<dbReference type="SUPFAM" id="SSF52313">
    <property type="entry name" value="Ribosomal protein S2"/>
    <property type="match status" value="1"/>
</dbReference>
<dbReference type="PROSITE" id="PS00962">
    <property type="entry name" value="RIBOSOMAL_S2_1"/>
    <property type="match status" value="1"/>
</dbReference>
<dbReference type="PROSITE" id="PS00963">
    <property type="entry name" value="RIBOSOMAL_S2_2"/>
    <property type="match status" value="1"/>
</dbReference>